<gene>
    <name evidence="2" type="primary">ddl</name>
    <name type="ordered locus">FTH_1833</name>
</gene>
<sequence>MKNEKIVVLYGGDSPEREVSLKSGKAVLDSLISQGYDAVGVDASGKELVAKLLELKPDKCFVALHGEDGENGRVSALLEMLEIKHTSSSMKSSVITMDKMISKEILMHHRMPTPMAKFLTDKLVAEDEISFPVAVKPSSGGSSIATFKVKSIQELKHAYEEASKYGEVMIEQWVTGKEITVAIVNDEVYSSVWIEPQNEFYDYESKYSGKSIYHSPSGLCEQKELEVRQLAKKAYDLLGCSGHARVDFIYDDRGNFYIMEINSSPGMTDNSLSPKSAAAEGVDFDSFVKRIIEQAQ</sequence>
<accession>Q0BK01</accession>
<protein>
    <recommendedName>
        <fullName evidence="2">D-alanine--D-alanine ligase</fullName>
        <ecNumber evidence="2">6.3.2.4</ecNumber>
    </recommendedName>
    <alternativeName>
        <fullName evidence="2">D-Ala-D-Ala ligase</fullName>
    </alternativeName>
    <alternativeName>
        <fullName evidence="2">D-alanylalanine synthetase</fullName>
    </alternativeName>
</protein>
<feature type="chain" id="PRO_0000341096" description="D-alanine--D-alanine ligase">
    <location>
        <begin position="1"/>
        <end position="296"/>
    </location>
</feature>
<feature type="domain" description="ATP-grasp" evidence="2">
    <location>
        <begin position="103"/>
        <end position="293"/>
    </location>
</feature>
<feature type="binding site" evidence="2">
    <location>
        <begin position="129"/>
        <end position="180"/>
    </location>
    <ligand>
        <name>ATP</name>
        <dbReference type="ChEBI" id="CHEBI:30616"/>
    </ligand>
</feature>
<feature type="binding site" evidence="2">
    <location>
        <position position="247"/>
    </location>
    <ligand>
        <name>Mg(2+)</name>
        <dbReference type="ChEBI" id="CHEBI:18420"/>
        <label>1</label>
    </ligand>
</feature>
<feature type="binding site" evidence="2">
    <location>
        <position position="260"/>
    </location>
    <ligand>
        <name>Mg(2+)</name>
        <dbReference type="ChEBI" id="CHEBI:18420"/>
        <label>1</label>
    </ligand>
</feature>
<feature type="binding site" evidence="2">
    <location>
        <position position="260"/>
    </location>
    <ligand>
        <name>Mg(2+)</name>
        <dbReference type="ChEBI" id="CHEBI:18420"/>
        <label>2</label>
    </ligand>
</feature>
<feature type="binding site" evidence="2">
    <location>
        <position position="262"/>
    </location>
    <ligand>
        <name>Mg(2+)</name>
        <dbReference type="ChEBI" id="CHEBI:18420"/>
        <label>2</label>
    </ligand>
</feature>
<reference key="1">
    <citation type="journal article" date="2006" name="J. Bacteriol.">
        <title>Chromosome rearrangement and diversification of Francisella tularensis revealed by the type B (OSU18) genome sequence.</title>
        <authorList>
            <person name="Petrosino J.F."/>
            <person name="Xiang Q."/>
            <person name="Karpathy S.E."/>
            <person name="Jiang H."/>
            <person name="Yerrapragada S."/>
            <person name="Liu Y."/>
            <person name="Gioia J."/>
            <person name="Hemphill L."/>
            <person name="Gonzalez A."/>
            <person name="Raghavan T.M."/>
            <person name="Uzman A."/>
            <person name="Fox G.E."/>
            <person name="Highlander S."/>
            <person name="Reichard M."/>
            <person name="Morton R.J."/>
            <person name="Clinkenbeard K.D."/>
            <person name="Weinstock G.M."/>
        </authorList>
    </citation>
    <scope>NUCLEOTIDE SEQUENCE [LARGE SCALE GENOMIC DNA]</scope>
    <source>
        <strain>OSU18</strain>
    </source>
</reference>
<keyword id="KW-0067">ATP-binding</keyword>
<keyword id="KW-0133">Cell shape</keyword>
<keyword id="KW-0961">Cell wall biogenesis/degradation</keyword>
<keyword id="KW-0963">Cytoplasm</keyword>
<keyword id="KW-0436">Ligase</keyword>
<keyword id="KW-0460">Magnesium</keyword>
<keyword id="KW-0464">Manganese</keyword>
<keyword id="KW-0479">Metal-binding</keyword>
<keyword id="KW-0547">Nucleotide-binding</keyword>
<keyword id="KW-0573">Peptidoglycan synthesis</keyword>
<organism>
    <name type="scientific">Francisella tularensis subsp. holarctica (strain OSU18)</name>
    <dbReference type="NCBI Taxonomy" id="393011"/>
    <lineage>
        <taxon>Bacteria</taxon>
        <taxon>Pseudomonadati</taxon>
        <taxon>Pseudomonadota</taxon>
        <taxon>Gammaproteobacteria</taxon>
        <taxon>Thiotrichales</taxon>
        <taxon>Francisellaceae</taxon>
        <taxon>Francisella</taxon>
    </lineage>
</organism>
<dbReference type="EC" id="6.3.2.4" evidence="2"/>
<dbReference type="EMBL" id="CP000437">
    <property type="protein sequence ID" value="ABI83583.1"/>
    <property type="molecule type" value="Genomic_DNA"/>
</dbReference>
<dbReference type="RefSeq" id="WP_003027426.1">
    <property type="nucleotide sequence ID" value="NC_017463.1"/>
</dbReference>
<dbReference type="SMR" id="Q0BK01"/>
<dbReference type="KEGG" id="fth:FTH_1833"/>
<dbReference type="UniPathway" id="UPA00219"/>
<dbReference type="GO" id="GO:0005737">
    <property type="term" value="C:cytoplasm"/>
    <property type="evidence" value="ECO:0007669"/>
    <property type="project" value="UniProtKB-SubCell"/>
</dbReference>
<dbReference type="GO" id="GO:0005524">
    <property type="term" value="F:ATP binding"/>
    <property type="evidence" value="ECO:0007669"/>
    <property type="project" value="UniProtKB-KW"/>
</dbReference>
<dbReference type="GO" id="GO:0008716">
    <property type="term" value="F:D-alanine-D-alanine ligase activity"/>
    <property type="evidence" value="ECO:0007669"/>
    <property type="project" value="UniProtKB-UniRule"/>
</dbReference>
<dbReference type="GO" id="GO:0046872">
    <property type="term" value="F:metal ion binding"/>
    <property type="evidence" value="ECO:0007669"/>
    <property type="project" value="UniProtKB-KW"/>
</dbReference>
<dbReference type="GO" id="GO:0071555">
    <property type="term" value="P:cell wall organization"/>
    <property type="evidence" value="ECO:0007669"/>
    <property type="project" value="UniProtKB-KW"/>
</dbReference>
<dbReference type="GO" id="GO:0009252">
    <property type="term" value="P:peptidoglycan biosynthetic process"/>
    <property type="evidence" value="ECO:0007669"/>
    <property type="project" value="UniProtKB-UniRule"/>
</dbReference>
<dbReference type="GO" id="GO:0008360">
    <property type="term" value="P:regulation of cell shape"/>
    <property type="evidence" value="ECO:0007669"/>
    <property type="project" value="UniProtKB-KW"/>
</dbReference>
<dbReference type="Gene3D" id="3.40.50.20">
    <property type="match status" value="1"/>
</dbReference>
<dbReference type="Gene3D" id="3.30.1490.20">
    <property type="entry name" value="ATP-grasp fold, A domain"/>
    <property type="match status" value="1"/>
</dbReference>
<dbReference type="Gene3D" id="3.30.470.20">
    <property type="entry name" value="ATP-grasp fold, B domain"/>
    <property type="match status" value="1"/>
</dbReference>
<dbReference type="HAMAP" id="MF_00047">
    <property type="entry name" value="Dala_Dala_lig"/>
    <property type="match status" value="1"/>
</dbReference>
<dbReference type="InterPro" id="IPR011761">
    <property type="entry name" value="ATP-grasp"/>
</dbReference>
<dbReference type="InterPro" id="IPR013815">
    <property type="entry name" value="ATP_grasp_subdomain_1"/>
</dbReference>
<dbReference type="InterPro" id="IPR000291">
    <property type="entry name" value="D-Ala_lig_Van_CS"/>
</dbReference>
<dbReference type="InterPro" id="IPR005905">
    <property type="entry name" value="D_ala_D_ala"/>
</dbReference>
<dbReference type="InterPro" id="IPR011095">
    <property type="entry name" value="Dala_Dala_lig_C"/>
</dbReference>
<dbReference type="InterPro" id="IPR016185">
    <property type="entry name" value="PreATP-grasp_dom_sf"/>
</dbReference>
<dbReference type="NCBIfam" id="TIGR01205">
    <property type="entry name" value="D_ala_D_alaTIGR"/>
    <property type="match status" value="1"/>
</dbReference>
<dbReference type="NCBIfam" id="NF002378">
    <property type="entry name" value="PRK01372.1"/>
    <property type="match status" value="1"/>
</dbReference>
<dbReference type="NCBIfam" id="NF011167">
    <property type="entry name" value="PRK14569.1"/>
    <property type="match status" value="1"/>
</dbReference>
<dbReference type="PANTHER" id="PTHR23132">
    <property type="entry name" value="D-ALANINE--D-ALANINE LIGASE"/>
    <property type="match status" value="1"/>
</dbReference>
<dbReference type="PANTHER" id="PTHR23132:SF23">
    <property type="entry name" value="D-ALANINE--D-ALANINE LIGASE B"/>
    <property type="match status" value="1"/>
</dbReference>
<dbReference type="Pfam" id="PF07478">
    <property type="entry name" value="Dala_Dala_lig_C"/>
    <property type="match status" value="1"/>
</dbReference>
<dbReference type="PIRSF" id="PIRSF039102">
    <property type="entry name" value="Ddl/VanB"/>
    <property type="match status" value="1"/>
</dbReference>
<dbReference type="SUPFAM" id="SSF56059">
    <property type="entry name" value="Glutathione synthetase ATP-binding domain-like"/>
    <property type="match status" value="1"/>
</dbReference>
<dbReference type="SUPFAM" id="SSF52440">
    <property type="entry name" value="PreATP-grasp domain"/>
    <property type="match status" value="1"/>
</dbReference>
<dbReference type="PROSITE" id="PS50975">
    <property type="entry name" value="ATP_GRASP"/>
    <property type="match status" value="1"/>
</dbReference>
<dbReference type="PROSITE" id="PS00843">
    <property type="entry name" value="DALA_DALA_LIGASE_1"/>
    <property type="match status" value="1"/>
</dbReference>
<dbReference type="PROSITE" id="PS00844">
    <property type="entry name" value="DALA_DALA_LIGASE_2"/>
    <property type="match status" value="1"/>
</dbReference>
<name>DDL_FRATO</name>
<evidence type="ECO:0000250" key="1"/>
<evidence type="ECO:0000255" key="2">
    <source>
        <dbReference type="HAMAP-Rule" id="MF_00047"/>
    </source>
</evidence>
<proteinExistence type="inferred from homology"/>
<comment type="function">
    <text evidence="2">Cell wall formation.</text>
</comment>
<comment type="catalytic activity">
    <reaction evidence="2">
        <text>2 D-alanine + ATP = D-alanyl-D-alanine + ADP + phosphate + H(+)</text>
        <dbReference type="Rhea" id="RHEA:11224"/>
        <dbReference type="ChEBI" id="CHEBI:15378"/>
        <dbReference type="ChEBI" id="CHEBI:30616"/>
        <dbReference type="ChEBI" id="CHEBI:43474"/>
        <dbReference type="ChEBI" id="CHEBI:57416"/>
        <dbReference type="ChEBI" id="CHEBI:57822"/>
        <dbReference type="ChEBI" id="CHEBI:456216"/>
        <dbReference type="EC" id="6.3.2.4"/>
    </reaction>
</comment>
<comment type="cofactor">
    <cofactor evidence="1">
        <name>Mg(2+)</name>
        <dbReference type="ChEBI" id="CHEBI:18420"/>
    </cofactor>
    <cofactor evidence="1">
        <name>Mn(2+)</name>
        <dbReference type="ChEBI" id="CHEBI:29035"/>
    </cofactor>
    <text evidence="1">Binds 2 magnesium or manganese ions per subunit.</text>
</comment>
<comment type="pathway">
    <text evidence="2">Cell wall biogenesis; peptidoglycan biosynthesis.</text>
</comment>
<comment type="subcellular location">
    <subcellularLocation>
        <location evidence="2">Cytoplasm</location>
    </subcellularLocation>
</comment>
<comment type="similarity">
    <text evidence="2">Belongs to the D-alanine--D-alanine ligase family.</text>
</comment>